<keyword id="KW-0965">Cell junction</keyword>
<keyword id="KW-0343">GTPase activation</keyword>
<keyword id="KW-0488">Methylation</keyword>
<keyword id="KW-0597">Phosphoprotein</keyword>
<keyword id="KW-1185">Reference proteome</keyword>
<gene>
    <name type="primary">Stard8</name>
    <name type="synonym">Kiaa0189</name>
</gene>
<organism>
    <name type="scientific">Mus musculus</name>
    <name type="common">Mouse</name>
    <dbReference type="NCBI Taxonomy" id="10090"/>
    <lineage>
        <taxon>Eukaryota</taxon>
        <taxon>Metazoa</taxon>
        <taxon>Chordata</taxon>
        <taxon>Craniata</taxon>
        <taxon>Vertebrata</taxon>
        <taxon>Euteleostomi</taxon>
        <taxon>Mammalia</taxon>
        <taxon>Eutheria</taxon>
        <taxon>Euarchontoglires</taxon>
        <taxon>Glires</taxon>
        <taxon>Rodentia</taxon>
        <taxon>Myomorpha</taxon>
        <taxon>Muroidea</taxon>
        <taxon>Muridae</taxon>
        <taxon>Murinae</taxon>
        <taxon>Mus</taxon>
        <taxon>Mus</taxon>
    </lineage>
</organism>
<reference key="1">
    <citation type="journal article" date="2005" name="Science">
        <title>The transcriptional landscape of the mammalian genome.</title>
        <authorList>
            <person name="Carninci P."/>
            <person name="Kasukawa T."/>
            <person name="Katayama S."/>
            <person name="Gough J."/>
            <person name="Frith M.C."/>
            <person name="Maeda N."/>
            <person name="Oyama R."/>
            <person name="Ravasi T."/>
            <person name="Lenhard B."/>
            <person name="Wells C."/>
            <person name="Kodzius R."/>
            <person name="Shimokawa K."/>
            <person name="Bajic V.B."/>
            <person name="Brenner S.E."/>
            <person name="Batalov S."/>
            <person name="Forrest A.R."/>
            <person name="Zavolan M."/>
            <person name="Davis M.J."/>
            <person name="Wilming L.G."/>
            <person name="Aidinis V."/>
            <person name="Allen J.E."/>
            <person name="Ambesi-Impiombato A."/>
            <person name="Apweiler R."/>
            <person name="Aturaliya R.N."/>
            <person name="Bailey T.L."/>
            <person name="Bansal M."/>
            <person name="Baxter L."/>
            <person name="Beisel K.W."/>
            <person name="Bersano T."/>
            <person name="Bono H."/>
            <person name="Chalk A.M."/>
            <person name="Chiu K.P."/>
            <person name="Choudhary V."/>
            <person name="Christoffels A."/>
            <person name="Clutterbuck D.R."/>
            <person name="Crowe M.L."/>
            <person name="Dalla E."/>
            <person name="Dalrymple B.P."/>
            <person name="de Bono B."/>
            <person name="Della Gatta G."/>
            <person name="di Bernardo D."/>
            <person name="Down T."/>
            <person name="Engstrom P."/>
            <person name="Fagiolini M."/>
            <person name="Faulkner G."/>
            <person name="Fletcher C.F."/>
            <person name="Fukushima T."/>
            <person name="Furuno M."/>
            <person name="Futaki S."/>
            <person name="Gariboldi M."/>
            <person name="Georgii-Hemming P."/>
            <person name="Gingeras T.R."/>
            <person name="Gojobori T."/>
            <person name="Green R.E."/>
            <person name="Gustincich S."/>
            <person name="Harbers M."/>
            <person name="Hayashi Y."/>
            <person name="Hensch T.K."/>
            <person name="Hirokawa N."/>
            <person name="Hill D."/>
            <person name="Huminiecki L."/>
            <person name="Iacono M."/>
            <person name="Ikeo K."/>
            <person name="Iwama A."/>
            <person name="Ishikawa T."/>
            <person name="Jakt M."/>
            <person name="Kanapin A."/>
            <person name="Katoh M."/>
            <person name="Kawasawa Y."/>
            <person name="Kelso J."/>
            <person name="Kitamura H."/>
            <person name="Kitano H."/>
            <person name="Kollias G."/>
            <person name="Krishnan S.P."/>
            <person name="Kruger A."/>
            <person name="Kummerfeld S.K."/>
            <person name="Kurochkin I.V."/>
            <person name="Lareau L.F."/>
            <person name="Lazarevic D."/>
            <person name="Lipovich L."/>
            <person name="Liu J."/>
            <person name="Liuni S."/>
            <person name="McWilliam S."/>
            <person name="Madan Babu M."/>
            <person name="Madera M."/>
            <person name="Marchionni L."/>
            <person name="Matsuda H."/>
            <person name="Matsuzawa S."/>
            <person name="Miki H."/>
            <person name="Mignone F."/>
            <person name="Miyake S."/>
            <person name="Morris K."/>
            <person name="Mottagui-Tabar S."/>
            <person name="Mulder N."/>
            <person name="Nakano N."/>
            <person name="Nakauchi H."/>
            <person name="Ng P."/>
            <person name="Nilsson R."/>
            <person name="Nishiguchi S."/>
            <person name="Nishikawa S."/>
            <person name="Nori F."/>
            <person name="Ohara O."/>
            <person name="Okazaki Y."/>
            <person name="Orlando V."/>
            <person name="Pang K.C."/>
            <person name="Pavan W.J."/>
            <person name="Pavesi G."/>
            <person name="Pesole G."/>
            <person name="Petrovsky N."/>
            <person name="Piazza S."/>
            <person name="Reed J."/>
            <person name="Reid J.F."/>
            <person name="Ring B.Z."/>
            <person name="Ringwald M."/>
            <person name="Rost B."/>
            <person name="Ruan Y."/>
            <person name="Salzberg S.L."/>
            <person name="Sandelin A."/>
            <person name="Schneider C."/>
            <person name="Schoenbach C."/>
            <person name="Sekiguchi K."/>
            <person name="Semple C.A."/>
            <person name="Seno S."/>
            <person name="Sessa L."/>
            <person name="Sheng Y."/>
            <person name="Shibata Y."/>
            <person name="Shimada H."/>
            <person name="Shimada K."/>
            <person name="Silva D."/>
            <person name="Sinclair B."/>
            <person name="Sperling S."/>
            <person name="Stupka E."/>
            <person name="Sugiura K."/>
            <person name="Sultana R."/>
            <person name="Takenaka Y."/>
            <person name="Taki K."/>
            <person name="Tammoja K."/>
            <person name="Tan S.L."/>
            <person name="Tang S."/>
            <person name="Taylor M.S."/>
            <person name="Tegner J."/>
            <person name="Teichmann S.A."/>
            <person name="Ueda H.R."/>
            <person name="van Nimwegen E."/>
            <person name="Verardo R."/>
            <person name="Wei C.L."/>
            <person name="Yagi K."/>
            <person name="Yamanishi H."/>
            <person name="Zabarovsky E."/>
            <person name="Zhu S."/>
            <person name="Zimmer A."/>
            <person name="Hide W."/>
            <person name="Bult C."/>
            <person name="Grimmond S.M."/>
            <person name="Teasdale R.D."/>
            <person name="Liu E.T."/>
            <person name="Brusic V."/>
            <person name="Quackenbush J."/>
            <person name="Wahlestedt C."/>
            <person name="Mattick J.S."/>
            <person name="Hume D.A."/>
            <person name="Kai C."/>
            <person name="Sasaki D."/>
            <person name="Tomaru Y."/>
            <person name="Fukuda S."/>
            <person name="Kanamori-Katayama M."/>
            <person name="Suzuki M."/>
            <person name="Aoki J."/>
            <person name="Arakawa T."/>
            <person name="Iida J."/>
            <person name="Imamura K."/>
            <person name="Itoh M."/>
            <person name="Kato T."/>
            <person name="Kawaji H."/>
            <person name="Kawagashira N."/>
            <person name="Kawashima T."/>
            <person name="Kojima M."/>
            <person name="Kondo S."/>
            <person name="Konno H."/>
            <person name="Nakano K."/>
            <person name="Ninomiya N."/>
            <person name="Nishio T."/>
            <person name="Okada M."/>
            <person name="Plessy C."/>
            <person name="Shibata K."/>
            <person name="Shiraki T."/>
            <person name="Suzuki S."/>
            <person name="Tagami M."/>
            <person name="Waki K."/>
            <person name="Watahiki A."/>
            <person name="Okamura-Oho Y."/>
            <person name="Suzuki H."/>
            <person name="Kawai J."/>
            <person name="Hayashizaki Y."/>
        </authorList>
    </citation>
    <scope>NUCLEOTIDE SEQUENCE [LARGE SCALE MRNA]</scope>
    <source>
        <strain>C57BL/6J</strain>
        <tissue>Bone marrow</tissue>
        <tissue>Embryo</tissue>
    </source>
</reference>
<reference key="2">
    <citation type="journal article" date="2009" name="PLoS Biol.">
        <title>Lineage-specific biology revealed by a finished genome assembly of the mouse.</title>
        <authorList>
            <person name="Church D.M."/>
            <person name="Goodstadt L."/>
            <person name="Hillier L.W."/>
            <person name="Zody M.C."/>
            <person name="Goldstein S."/>
            <person name="She X."/>
            <person name="Bult C.J."/>
            <person name="Agarwala R."/>
            <person name="Cherry J.L."/>
            <person name="DiCuccio M."/>
            <person name="Hlavina W."/>
            <person name="Kapustin Y."/>
            <person name="Meric P."/>
            <person name="Maglott D."/>
            <person name="Birtle Z."/>
            <person name="Marques A.C."/>
            <person name="Graves T."/>
            <person name="Zhou S."/>
            <person name="Teague B."/>
            <person name="Potamousis K."/>
            <person name="Churas C."/>
            <person name="Place M."/>
            <person name="Herschleb J."/>
            <person name="Runnheim R."/>
            <person name="Forrest D."/>
            <person name="Amos-Landgraf J."/>
            <person name="Schwartz D.C."/>
            <person name="Cheng Z."/>
            <person name="Lindblad-Toh K."/>
            <person name="Eichler E.E."/>
            <person name="Ponting C.P."/>
        </authorList>
    </citation>
    <scope>NUCLEOTIDE SEQUENCE [LARGE SCALE GENOMIC DNA]</scope>
    <source>
        <strain>C57BL/6J</strain>
    </source>
</reference>
<reference key="3">
    <citation type="journal article" date="2004" name="Genome Res.">
        <title>The status, quality, and expansion of the NIH full-length cDNA project: the Mammalian Gene Collection (MGC).</title>
        <authorList>
            <consortium name="The MGC Project Team"/>
        </authorList>
    </citation>
    <scope>NUCLEOTIDE SEQUENCE [LARGE SCALE MRNA]</scope>
    <source>
        <strain>C57BL/6J</strain>
        <tissue>Brain</tissue>
        <tissue>Kidney</tissue>
        <tissue>Mammary tumor</tissue>
    </source>
</reference>
<reference key="4">
    <citation type="journal article" date="2004" name="DNA Res.">
        <title>Prediction of the coding sequences of mouse homologues of KIAA gene: IV. The complete nucleotide sequences of 500 mouse KIAA-homologous cDNAs identified by screening of terminal sequences of cDNA clones randomly sampled from size-fractionated libraries.</title>
        <authorList>
            <person name="Okazaki N."/>
            <person name="Kikuno R."/>
            <person name="Ohara R."/>
            <person name="Inamoto S."/>
            <person name="Koseki H."/>
            <person name="Hiraoka S."/>
            <person name="Saga Y."/>
            <person name="Seino S."/>
            <person name="Nishimura M."/>
            <person name="Kaisho T."/>
            <person name="Hoshino K."/>
            <person name="Kitamura H."/>
            <person name="Nagase T."/>
            <person name="Ohara O."/>
            <person name="Koga H."/>
        </authorList>
    </citation>
    <scope>NUCLEOTIDE SEQUENCE [LARGE SCALE MRNA] OF 736-1019</scope>
    <source>
        <tissue>Spleen</tissue>
    </source>
</reference>
<reference key="5">
    <citation type="journal article" date="2007" name="Biochem. Biophys. Res. Commun.">
        <title>START-GAP3/DLC3 is a GAP for RhoA and Cdc42 and is localized in focal adhesions regulating cell morphology.</title>
        <authorList>
            <person name="Kawai K."/>
            <person name="Kiyota M."/>
            <person name="Seike J."/>
            <person name="Deki Y."/>
            <person name="Yagisawa H."/>
        </authorList>
    </citation>
    <scope>SUBCELLULAR LOCATION</scope>
</reference>
<reference key="6">
    <citation type="journal article" date="2010" name="Cell">
        <title>A tissue-specific atlas of mouse protein phosphorylation and expression.</title>
        <authorList>
            <person name="Huttlin E.L."/>
            <person name="Jedrychowski M.P."/>
            <person name="Elias J.E."/>
            <person name="Goswami T."/>
            <person name="Rad R."/>
            <person name="Beausoleil S.A."/>
            <person name="Villen J."/>
            <person name="Haas W."/>
            <person name="Sowa M.E."/>
            <person name="Gygi S.P."/>
        </authorList>
    </citation>
    <scope>PHOSPHORYLATION [LARGE SCALE ANALYSIS] AT SER-237; SER-494 AND SER-502</scope>
    <scope>IDENTIFICATION BY MASS SPECTROMETRY [LARGE SCALE ANALYSIS]</scope>
    <source>
        <tissue>Brown adipose tissue</tissue>
        <tissue>Kidney</tissue>
        <tissue>Lung</tissue>
    </source>
</reference>
<reference key="7">
    <citation type="journal article" date="2014" name="Mol. Cell. Proteomics">
        <title>Immunoaffinity enrichment and mass spectrometry analysis of protein methylation.</title>
        <authorList>
            <person name="Guo A."/>
            <person name="Gu H."/>
            <person name="Zhou J."/>
            <person name="Mulhern D."/>
            <person name="Wang Y."/>
            <person name="Lee K.A."/>
            <person name="Yang V."/>
            <person name="Aguiar M."/>
            <person name="Kornhauser J."/>
            <person name="Jia X."/>
            <person name="Ren J."/>
            <person name="Beausoleil S.A."/>
            <person name="Silva J.C."/>
            <person name="Vemulapalli V."/>
            <person name="Bedford M.T."/>
            <person name="Comb M.J."/>
        </authorList>
    </citation>
    <scope>METHYLATION [LARGE SCALE ANALYSIS] AT ARG-168</scope>
    <scope>IDENTIFICATION BY MASS SPECTROMETRY [LARGE SCALE ANALYSIS]</scope>
    <source>
        <tissue>Brain</tissue>
    </source>
</reference>
<name>STAR8_MOUSE</name>
<comment type="function">
    <text evidence="1">Accelerates GTPase activity of RHOA and CDC42, but not RAC1. Stimulates the hydrolysis of phosphatidylinositol 4,5-bisphosphate by PLCD1 (By similarity).</text>
</comment>
<comment type="subunit">
    <text evidence="1">Binds both the SH2 and PTB domains of TNS1.</text>
</comment>
<comment type="subcellular location">
    <subcellularLocation>
        <location evidence="6">Cell junction</location>
        <location evidence="6">Focal adhesion</location>
    </subcellularLocation>
</comment>
<sequence>MTLNNCASMKLEVHFQCKQDDDSEEEEQCTISSHWAFEQESKCGSLMGSSALLAPPSPSLLGTSSCESVLTELSAASLPAISASLSPESADQPLLGLVPSPSNQPFLSPPQGQEGSQDKVKKHYSRSFLKHLESLRRKEKGDSRQTEPEQCLATSEKATKASSFRTCRGFLSAGFHRAKNRVTTSARVRDGETQKAWEAWPVATFRHPQPIRRRDYLVHVPGDHKPGTFPRSLSIESLCPDEGRHLADWQSSRCWGYEGRRGSCGSTGSHASTYDNLPELYPAEPIQAEAEAEAEEGEGSYAHLDDILEHVWGLQQRVELWSQTMYPDLRPGDKEEEEEEEEEEEEATSSVEVATVEVEGQDEDLAQAESQAHRGFPTQVKEEVPLIVLDQAPNVVEPLVQAEAEAPAQAQDLEQEANSTAEPISASSLSVEEGHSISDTAVSSSELDSSGNSMNEADAADAPAGLQASVPRERRDSGVGASLTRPCRKLRWHSFQNSHRPSLNSESLEINRQFAGQINLLHKGSLLRLTGFMEKYTVPHKQAWVWSMPKFMKRNKTPDYRGHHVFGVPPLIHVQRTGQPLPQSIQQAMRYLRSQCLDQVGIFRKSGVKSRIQSLRQMNENSPDNVCYEGQSAYDVADLLKQYFRDLPEPIFTSKLTTTFLQIYQLLPKEQWLAAAQAATLLLPDENREVLQTLLYFLSDIASAEENQMTAGNLAVCLAPSIFHLNVSKKDSSSPRIKSKRSLVGRPGPRDLSENMAATQGLSHMISDCKKLFQVPQDMVVQLCGSYSAAELSPPGPALAELRQAQAAGVSLSLYMEESVQELLRDAAERFKGWTNVPGPQHTELACRKAPDGHPLRMWKASTEVAAPPAVVLHRVLRERALWDEDLLRAQVLEALMPGVELYHYVTDSMAPHPCRDFVVLRMWRSDLPRGGCLLVSQSLDPEQPVPESGVRALMLTSQYLMEPCGLGRSRLTHICRADLRGRSPDWYNKVFGHLCAMEVAKIRDSFPTLQAAGPETKL</sequence>
<accession>Q8K031</accession>
<accession>B1AZJ2</accession>
<accession>Q3UZC7</accession>
<accession>Q6A0A8</accession>
<accession>Q6P5E0</accession>
<accession>Q8R3X8</accession>
<dbReference type="EMBL" id="AK133927">
    <property type="protein sequence ID" value="BAE21930.1"/>
    <property type="molecule type" value="mRNA"/>
</dbReference>
<dbReference type="EMBL" id="AK149830">
    <property type="protein sequence ID" value="BAE29110.1"/>
    <property type="molecule type" value="mRNA"/>
</dbReference>
<dbReference type="EMBL" id="AK150259">
    <property type="protein sequence ID" value="BAE29418.1"/>
    <property type="molecule type" value="mRNA"/>
</dbReference>
<dbReference type="EMBL" id="AL954636">
    <property type="status" value="NOT_ANNOTATED_CDS"/>
    <property type="molecule type" value="Genomic_DNA"/>
</dbReference>
<dbReference type="EMBL" id="BC023434">
    <property type="protein sequence ID" value="AAH23434.1"/>
    <property type="molecule type" value="mRNA"/>
</dbReference>
<dbReference type="EMBL" id="BC034186">
    <property type="protein sequence ID" value="AAH34186.1"/>
    <property type="molecule type" value="mRNA"/>
</dbReference>
<dbReference type="EMBL" id="BC062944">
    <property type="protein sequence ID" value="AAH62944.1"/>
    <property type="molecule type" value="mRNA"/>
</dbReference>
<dbReference type="EMBL" id="AK172910">
    <property type="protein sequence ID" value="BAD32188.1"/>
    <property type="molecule type" value="mRNA"/>
</dbReference>
<dbReference type="CCDS" id="CCDS30297.1"/>
<dbReference type="RefSeq" id="NP_950183.1">
    <property type="nucleotide sequence ID" value="NM_199018.2"/>
</dbReference>
<dbReference type="RefSeq" id="XP_006528067.1">
    <property type="nucleotide sequence ID" value="XM_006528004.2"/>
</dbReference>
<dbReference type="RefSeq" id="XP_006528070.1">
    <property type="nucleotide sequence ID" value="XM_006528007.3"/>
</dbReference>
<dbReference type="RefSeq" id="XP_030107186.1">
    <property type="nucleotide sequence ID" value="XM_030251326.2"/>
</dbReference>
<dbReference type="RefSeq" id="XP_036017823.1">
    <property type="nucleotide sequence ID" value="XM_036161930.1"/>
</dbReference>
<dbReference type="RefSeq" id="XP_036017824.1">
    <property type="nucleotide sequence ID" value="XM_036161931.1"/>
</dbReference>
<dbReference type="SMR" id="Q8K031"/>
<dbReference type="FunCoup" id="Q8K031">
    <property type="interactions" value="36"/>
</dbReference>
<dbReference type="STRING" id="10090.ENSMUSP00000044491"/>
<dbReference type="iPTMnet" id="Q8K031"/>
<dbReference type="PhosphoSitePlus" id="Q8K031"/>
<dbReference type="jPOST" id="Q8K031"/>
<dbReference type="PaxDb" id="10090-ENSMUSP00000044491"/>
<dbReference type="ProteomicsDB" id="257366"/>
<dbReference type="Antibodypedia" id="27311">
    <property type="antibodies" value="126 antibodies from 20 providers"/>
</dbReference>
<dbReference type="DNASU" id="236920"/>
<dbReference type="Ensembl" id="ENSMUST00000036606.14">
    <property type="protein sequence ID" value="ENSMUSP00000044491.8"/>
    <property type="gene ID" value="ENSMUSG00000031216.14"/>
</dbReference>
<dbReference type="GeneID" id="236920"/>
<dbReference type="KEGG" id="mmu:236920"/>
<dbReference type="UCSC" id="uc009tvg.2">
    <property type="organism name" value="mouse"/>
</dbReference>
<dbReference type="AGR" id="MGI:2448556"/>
<dbReference type="CTD" id="9754"/>
<dbReference type="MGI" id="MGI:2448556">
    <property type="gene designation" value="Stard8"/>
</dbReference>
<dbReference type="VEuPathDB" id="HostDB:ENSMUSG00000031216"/>
<dbReference type="eggNOG" id="KOG2200">
    <property type="taxonomic scope" value="Eukaryota"/>
</dbReference>
<dbReference type="GeneTree" id="ENSGT00950000183061"/>
<dbReference type="HOGENOM" id="CLU_004367_0_1_1"/>
<dbReference type="InParanoid" id="Q8K031"/>
<dbReference type="OMA" id="QKAWEAW"/>
<dbReference type="OrthoDB" id="10003330at2759"/>
<dbReference type="PhylomeDB" id="Q8K031"/>
<dbReference type="TreeFam" id="TF314044"/>
<dbReference type="Reactome" id="R-MMU-8980692">
    <property type="pathway name" value="RHOA GTPase cycle"/>
</dbReference>
<dbReference type="Reactome" id="R-MMU-9013026">
    <property type="pathway name" value="RHOB GTPase cycle"/>
</dbReference>
<dbReference type="Reactome" id="R-MMU-9013148">
    <property type="pathway name" value="CDC42 GTPase cycle"/>
</dbReference>
<dbReference type="BioGRID-ORCS" id="236920">
    <property type="hits" value="4 hits in 78 CRISPR screens"/>
</dbReference>
<dbReference type="PRO" id="PR:Q8K031"/>
<dbReference type="Proteomes" id="UP000000589">
    <property type="component" value="Chromosome X"/>
</dbReference>
<dbReference type="RNAct" id="Q8K031">
    <property type="molecule type" value="protein"/>
</dbReference>
<dbReference type="Bgee" id="ENSMUSG00000031216">
    <property type="expression patterns" value="Expressed in placenta labyrinth and 205 other cell types or tissues"/>
</dbReference>
<dbReference type="ExpressionAtlas" id="Q8K031">
    <property type="expression patterns" value="baseline and differential"/>
</dbReference>
<dbReference type="GO" id="GO:0005925">
    <property type="term" value="C:focal adhesion"/>
    <property type="evidence" value="ECO:0007669"/>
    <property type="project" value="UniProtKB-SubCell"/>
</dbReference>
<dbReference type="GO" id="GO:0005096">
    <property type="term" value="F:GTPase activator activity"/>
    <property type="evidence" value="ECO:0007669"/>
    <property type="project" value="UniProtKB-KW"/>
</dbReference>
<dbReference type="GO" id="GO:0008289">
    <property type="term" value="F:lipid binding"/>
    <property type="evidence" value="ECO:0007669"/>
    <property type="project" value="InterPro"/>
</dbReference>
<dbReference type="GO" id="GO:0007165">
    <property type="term" value="P:signal transduction"/>
    <property type="evidence" value="ECO:0007669"/>
    <property type="project" value="InterPro"/>
</dbReference>
<dbReference type="FunFam" id="1.10.555.10:FF:000007">
    <property type="entry name" value="rho GTPase-activating protein 7 isoform X2"/>
    <property type="match status" value="1"/>
</dbReference>
<dbReference type="FunFam" id="3.30.530.20:FF:000009">
    <property type="entry name" value="StAR related lipid transfer domain containing 13"/>
    <property type="match status" value="1"/>
</dbReference>
<dbReference type="Gene3D" id="3.30.530.20">
    <property type="match status" value="1"/>
</dbReference>
<dbReference type="Gene3D" id="1.10.555.10">
    <property type="entry name" value="Rho GTPase activation protein"/>
    <property type="match status" value="1"/>
</dbReference>
<dbReference type="InterPro" id="IPR008936">
    <property type="entry name" value="Rho_GTPase_activation_prot"/>
</dbReference>
<dbReference type="InterPro" id="IPR000198">
    <property type="entry name" value="RhoGAP_dom"/>
</dbReference>
<dbReference type="InterPro" id="IPR023393">
    <property type="entry name" value="START-like_dom_sf"/>
</dbReference>
<dbReference type="InterPro" id="IPR002913">
    <property type="entry name" value="START_lipid-bd_dom"/>
</dbReference>
<dbReference type="PANTHER" id="PTHR12659">
    <property type="entry name" value="RHO-TYPE GTPASE ACTIVATING PROTEIN"/>
    <property type="match status" value="1"/>
</dbReference>
<dbReference type="PANTHER" id="PTHR12659:SF3">
    <property type="entry name" value="STAR-RELATED LIPID TRANSFER PROTEIN 8"/>
    <property type="match status" value="1"/>
</dbReference>
<dbReference type="Pfam" id="PF00620">
    <property type="entry name" value="RhoGAP"/>
    <property type="match status" value="1"/>
</dbReference>
<dbReference type="Pfam" id="PF01852">
    <property type="entry name" value="START"/>
    <property type="match status" value="1"/>
</dbReference>
<dbReference type="SMART" id="SM00324">
    <property type="entry name" value="RhoGAP"/>
    <property type="match status" value="1"/>
</dbReference>
<dbReference type="SMART" id="SM00234">
    <property type="entry name" value="START"/>
    <property type="match status" value="1"/>
</dbReference>
<dbReference type="SUPFAM" id="SSF55961">
    <property type="entry name" value="Bet v1-like"/>
    <property type="match status" value="1"/>
</dbReference>
<dbReference type="SUPFAM" id="SSF48350">
    <property type="entry name" value="GTPase activation domain, GAP"/>
    <property type="match status" value="1"/>
</dbReference>
<dbReference type="PROSITE" id="PS50238">
    <property type="entry name" value="RHOGAP"/>
    <property type="match status" value="1"/>
</dbReference>
<dbReference type="PROSITE" id="PS50848">
    <property type="entry name" value="START"/>
    <property type="match status" value="1"/>
</dbReference>
<evidence type="ECO:0000250" key="1"/>
<evidence type="ECO:0000250" key="2">
    <source>
        <dbReference type="UniProtKB" id="Q92502"/>
    </source>
</evidence>
<evidence type="ECO:0000255" key="3">
    <source>
        <dbReference type="PROSITE-ProRule" id="PRU00172"/>
    </source>
</evidence>
<evidence type="ECO:0000255" key="4">
    <source>
        <dbReference type="PROSITE-ProRule" id="PRU00197"/>
    </source>
</evidence>
<evidence type="ECO:0000256" key="5">
    <source>
        <dbReference type="SAM" id="MobiDB-lite"/>
    </source>
</evidence>
<evidence type="ECO:0000269" key="6">
    <source>
    </source>
</evidence>
<evidence type="ECO:0000305" key="7"/>
<evidence type="ECO:0007744" key="8">
    <source>
    </source>
</evidence>
<evidence type="ECO:0007744" key="9">
    <source>
    </source>
</evidence>
<feature type="chain" id="PRO_0000220677" description="StAR-related lipid transfer protein 8">
    <location>
        <begin position="1"/>
        <end position="1019"/>
    </location>
</feature>
<feature type="domain" description="Rho-GAP" evidence="3">
    <location>
        <begin position="569"/>
        <end position="773"/>
    </location>
</feature>
<feature type="domain" description="START" evidence="4">
    <location>
        <begin position="805"/>
        <end position="1013"/>
    </location>
</feature>
<feature type="region of interest" description="Disordered" evidence="5">
    <location>
        <begin position="92"/>
        <end position="122"/>
    </location>
</feature>
<feature type="region of interest" description="Disordered" evidence="5">
    <location>
        <begin position="134"/>
        <end position="154"/>
    </location>
</feature>
<feature type="region of interest" description="Disordered" evidence="5">
    <location>
        <begin position="325"/>
        <end position="355"/>
    </location>
</feature>
<feature type="region of interest" description="Disordered" evidence="5">
    <location>
        <begin position="406"/>
        <end position="482"/>
    </location>
</feature>
<feature type="region of interest" description="Disordered" evidence="5">
    <location>
        <begin position="731"/>
        <end position="754"/>
    </location>
</feature>
<feature type="compositionally biased region" description="Polar residues" evidence="5">
    <location>
        <begin position="100"/>
        <end position="115"/>
    </location>
</feature>
<feature type="compositionally biased region" description="Basic and acidic residues" evidence="5">
    <location>
        <begin position="134"/>
        <end position="147"/>
    </location>
</feature>
<feature type="compositionally biased region" description="Acidic residues" evidence="5">
    <location>
        <begin position="334"/>
        <end position="347"/>
    </location>
</feature>
<feature type="compositionally biased region" description="Polar residues" evidence="5">
    <location>
        <begin position="418"/>
        <end position="430"/>
    </location>
</feature>
<feature type="compositionally biased region" description="Polar residues" evidence="5">
    <location>
        <begin position="437"/>
        <end position="455"/>
    </location>
</feature>
<feature type="site" description="Arginine finger; crucial for GTP hydrolysis by stabilizing the transition state" evidence="3">
    <location>
        <position position="604"/>
    </location>
</feature>
<feature type="modified residue" description="Phosphoserine" evidence="2">
    <location>
        <position position="108"/>
    </location>
</feature>
<feature type="modified residue" description="Asymmetric dimethylarginine" evidence="9">
    <location>
        <position position="168"/>
    </location>
</feature>
<feature type="modified residue" description="Phosphoserine" evidence="2">
    <location>
        <position position="234"/>
    </location>
</feature>
<feature type="modified residue" description="Phosphoserine" evidence="8">
    <location>
        <position position="237"/>
    </location>
</feature>
<feature type="modified residue" description="Phosphoserine" evidence="8">
    <location>
        <position position="494"/>
    </location>
</feature>
<feature type="modified residue" description="Phosphoserine" evidence="8">
    <location>
        <position position="502"/>
    </location>
</feature>
<feature type="sequence conflict" description="In Ref. 3; AAH23434/AAH34186." evidence="7" ref="3">
    <original>FL</original>
    <variation>IR</variation>
    <location>
        <begin position="170"/>
        <end position="171"/>
    </location>
</feature>
<feature type="sequence conflict" description="In Ref. 3; AAH23434/AAH34186." evidence="7" ref="3">
    <original>E</original>
    <variation>EE</variation>
    <location>
        <position position="346"/>
    </location>
</feature>
<feature type="sequence conflict" description="In Ref. 3; AAH23434/AAH34186." evidence="7" ref="3">
    <original>T</original>
    <variation>A</variation>
    <location>
        <position position="420"/>
    </location>
</feature>
<feature type="sequence conflict" description="In Ref. 1; BAE21930." evidence="7" ref="1">
    <original>F</original>
    <variation>L</variation>
    <location>
        <position position="514"/>
    </location>
</feature>
<protein>
    <recommendedName>
        <fullName>StAR-related lipid transfer protein 8</fullName>
    </recommendedName>
    <alternativeName>
        <fullName>START domain-containing protein 8</fullName>
        <shortName>StARD8</shortName>
    </alternativeName>
</protein>
<proteinExistence type="evidence at protein level"/>